<sequence length="112" mass="13288">MGLKEYKFGFESENIAVKFLKSHGYEILERNFHSRFGEIDIIAKKDEILHFIEVKATSKNYETAYRITSYKFSKILKTIKFYITKKQNETDFQVDFIGINKEKISFIENISL</sequence>
<name>Y216_CAMHC</name>
<gene>
    <name type="ordered locus">CHAB381_0216</name>
</gene>
<proteinExistence type="inferred from homology"/>
<comment type="similarity">
    <text evidence="1">Belongs to the UPF0102 family.</text>
</comment>
<protein>
    <recommendedName>
        <fullName evidence="1">UPF0102 protein CHAB381_0216</fullName>
    </recommendedName>
</protein>
<dbReference type="EMBL" id="CP000776">
    <property type="protein sequence ID" value="ABS51392.1"/>
    <property type="molecule type" value="Genomic_DNA"/>
</dbReference>
<dbReference type="RefSeq" id="WP_012108104.1">
    <property type="nucleotide sequence ID" value="NC_009714.1"/>
</dbReference>
<dbReference type="SMR" id="A7HZY2"/>
<dbReference type="STRING" id="360107.CHAB381_0216"/>
<dbReference type="KEGG" id="cha:CHAB381_0216"/>
<dbReference type="eggNOG" id="COG0792">
    <property type="taxonomic scope" value="Bacteria"/>
</dbReference>
<dbReference type="HOGENOM" id="CLU_115353_3_2_7"/>
<dbReference type="OrthoDB" id="9794876at2"/>
<dbReference type="Proteomes" id="UP000002407">
    <property type="component" value="Chromosome"/>
</dbReference>
<dbReference type="GO" id="GO:0003676">
    <property type="term" value="F:nucleic acid binding"/>
    <property type="evidence" value="ECO:0007669"/>
    <property type="project" value="InterPro"/>
</dbReference>
<dbReference type="Gene3D" id="3.40.1350.10">
    <property type="match status" value="1"/>
</dbReference>
<dbReference type="HAMAP" id="MF_00048">
    <property type="entry name" value="UPF0102"/>
    <property type="match status" value="1"/>
</dbReference>
<dbReference type="InterPro" id="IPR011335">
    <property type="entry name" value="Restrct_endonuc-II-like"/>
</dbReference>
<dbReference type="InterPro" id="IPR011856">
    <property type="entry name" value="tRNA_endonuc-like_dom_sf"/>
</dbReference>
<dbReference type="InterPro" id="IPR003509">
    <property type="entry name" value="UPF0102_YraN-like"/>
</dbReference>
<dbReference type="NCBIfam" id="NF009152">
    <property type="entry name" value="PRK12497.2-4"/>
    <property type="match status" value="1"/>
</dbReference>
<dbReference type="PANTHER" id="PTHR34039">
    <property type="entry name" value="UPF0102 PROTEIN YRAN"/>
    <property type="match status" value="1"/>
</dbReference>
<dbReference type="PANTHER" id="PTHR34039:SF1">
    <property type="entry name" value="UPF0102 PROTEIN YRAN"/>
    <property type="match status" value="1"/>
</dbReference>
<dbReference type="Pfam" id="PF02021">
    <property type="entry name" value="UPF0102"/>
    <property type="match status" value="1"/>
</dbReference>
<dbReference type="SUPFAM" id="SSF52980">
    <property type="entry name" value="Restriction endonuclease-like"/>
    <property type="match status" value="1"/>
</dbReference>
<evidence type="ECO:0000255" key="1">
    <source>
        <dbReference type="HAMAP-Rule" id="MF_00048"/>
    </source>
</evidence>
<keyword id="KW-1185">Reference proteome</keyword>
<accession>A7HZY2</accession>
<reference key="1">
    <citation type="submission" date="2007-07" db="EMBL/GenBank/DDBJ databases">
        <title>Complete genome sequence of Campylobacter hominis ATCC BAA-381, a commensal isolated from the human gastrointestinal tract.</title>
        <authorList>
            <person name="Fouts D.E."/>
            <person name="Mongodin E.F."/>
            <person name="Puiu D."/>
            <person name="Sebastian Y."/>
            <person name="Miller W.G."/>
            <person name="Mandrell R.E."/>
            <person name="Nelson K.E."/>
        </authorList>
    </citation>
    <scope>NUCLEOTIDE SEQUENCE [LARGE SCALE GENOMIC DNA]</scope>
    <source>
        <strain>ATCC BAA-381 / DSM 21671 / CCUG 45161 / LMG 19568 / NCTC 13146 / CH001A</strain>
    </source>
</reference>
<feature type="chain" id="PRO_1000009196" description="UPF0102 protein CHAB381_0216">
    <location>
        <begin position="1"/>
        <end position="112"/>
    </location>
</feature>
<organism>
    <name type="scientific">Campylobacter hominis (strain ATCC BAA-381 / DSM 21671 / CCUG 45161 / LMG 19568 / NCTC 13146 / CH001A)</name>
    <dbReference type="NCBI Taxonomy" id="360107"/>
    <lineage>
        <taxon>Bacteria</taxon>
        <taxon>Pseudomonadati</taxon>
        <taxon>Campylobacterota</taxon>
        <taxon>Epsilonproteobacteria</taxon>
        <taxon>Campylobacterales</taxon>
        <taxon>Campylobacteraceae</taxon>
        <taxon>Campylobacter</taxon>
    </lineage>
</organism>